<gene>
    <name type="primary">FTCDNL1</name>
    <name type="synonym">FONG</name>
</gene>
<accession>E5RQL4</accession>
<protein>
    <recommendedName>
        <fullName>Formiminotransferase N-terminal subdomain-containing protein</fullName>
    </recommendedName>
    <alternativeName>
        <fullName>Formiminotransferase-cyclodeaminase N-terminal-like protein</fullName>
    </alternativeName>
</protein>
<evidence type="ECO:0000255" key="1"/>
<evidence type="ECO:0000269" key="2">
    <source>
    </source>
</evidence>
<evidence type="ECO:0000305" key="3"/>
<comment type="tissue specificity">
    <text evidence="2">Widely expressed with highest levels in liver and skeletal muscle, and moderate levels in kidney, bone and pancreas.</text>
</comment>
<comment type="similarity">
    <text evidence="3">Belongs to the formiminotransferase family.</text>
</comment>
<organism>
    <name type="scientific">Homo sapiens</name>
    <name type="common">Human</name>
    <dbReference type="NCBI Taxonomy" id="9606"/>
    <lineage>
        <taxon>Eukaryota</taxon>
        <taxon>Metazoa</taxon>
        <taxon>Chordata</taxon>
        <taxon>Craniata</taxon>
        <taxon>Vertebrata</taxon>
        <taxon>Euteleostomi</taxon>
        <taxon>Mammalia</taxon>
        <taxon>Eutheria</taxon>
        <taxon>Euarchontoglires</taxon>
        <taxon>Primates</taxon>
        <taxon>Haplorrhini</taxon>
        <taxon>Catarrhini</taxon>
        <taxon>Hominidae</taxon>
        <taxon>Homo</taxon>
    </lineage>
</organism>
<reference key="1">
    <citation type="journal article" date="2011" name="PLoS ONE">
        <title>Common variants in a novel gene, FONG on chromosome 2q33.1 confer risk of osteoporosis in Japanese.</title>
        <authorList>
            <person name="Kou I."/>
            <person name="Takahashi A."/>
            <person name="Urano T."/>
            <person name="Fukui N."/>
            <person name="Ito H."/>
            <person name="Ozaki K."/>
            <person name="Tanaka T."/>
            <person name="Hosoi T."/>
            <person name="Shiraki M."/>
            <person name="Inoue S."/>
            <person name="Nakamura Y."/>
            <person name="Kamatani N."/>
            <person name="Kubo M."/>
            <person name="Mori S."/>
            <person name="Ikegawa S."/>
        </authorList>
    </citation>
    <scope>NUCLEOTIDE SEQUENCE [MRNA]</scope>
    <scope>TISSUE SPECIFICITY</scope>
</reference>
<reference key="2">
    <citation type="journal article" date="2005" name="Nature">
        <title>Generation and annotation of the DNA sequences of human chromosomes 2 and 4.</title>
        <authorList>
            <person name="Hillier L.W."/>
            <person name="Graves T.A."/>
            <person name="Fulton R.S."/>
            <person name="Fulton L.A."/>
            <person name="Pepin K.H."/>
            <person name="Minx P."/>
            <person name="Wagner-McPherson C."/>
            <person name="Layman D."/>
            <person name="Wylie K."/>
            <person name="Sekhon M."/>
            <person name="Becker M.C."/>
            <person name="Fewell G.A."/>
            <person name="Delehaunty K.D."/>
            <person name="Miner T.L."/>
            <person name="Nash W.E."/>
            <person name="Kremitzki C."/>
            <person name="Oddy L."/>
            <person name="Du H."/>
            <person name="Sun H."/>
            <person name="Bradshaw-Cordum H."/>
            <person name="Ali J."/>
            <person name="Carter J."/>
            <person name="Cordes M."/>
            <person name="Harris A."/>
            <person name="Isak A."/>
            <person name="van Brunt A."/>
            <person name="Nguyen C."/>
            <person name="Du F."/>
            <person name="Courtney L."/>
            <person name="Kalicki J."/>
            <person name="Ozersky P."/>
            <person name="Abbott S."/>
            <person name="Armstrong J."/>
            <person name="Belter E.A."/>
            <person name="Caruso L."/>
            <person name="Cedroni M."/>
            <person name="Cotton M."/>
            <person name="Davidson T."/>
            <person name="Desai A."/>
            <person name="Elliott G."/>
            <person name="Erb T."/>
            <person name="Fronick C."/>
            <person name="Gaige T."/>
            <person name="Haakenson W."/>
            <person name="Haglund K."/>
            <person name="Holmes A."/>
            <person name="Harkins R."/>
            <person name="Kim K."/>
            <person name="Kruchowski S.S."/>
            <person name="Strong C.M."/>
            <person name="Grewal N."/>
            <person name="Goyea E."/>
            <person name="Hou S."/>
            <person name="Levy A."/>
            <person name="Martinka S."/>
            <person name="Mead K."/>
            <person name="McLellan M.D."/>
            <person name="Meyer R."/>
            <person name="Randall-Maher J."/>
            <person name="Tomlinson C."/>
            <person name="Dauphin-Kohlberg S."/>
            <person name="Kozlowicz-Reilly A."/>
            <person name="Shah N."/>
            <person name="Swearengen-Shahid S."/>
            <person name="Snider J."/>
            <person name="Strong J.T."/>
            <person name="Thompson J."/>
            <person name="Yoakum M."/>
            <person name="Leonard S."/>
            <person name="Pearman C."/>
            <person name="Trani L."/>
            <person name="Radionenko M."/>
            <person name="Waligorski J.E."/>
            <person name="Wang C."/>
            <person name="Rock S.M."/>
            <person name="Tin-Wollam A.-M."/>
            <person name="Maupin R."/>
            <person name="Latreille P."/>
            <person name="Wendl M.C."/>
            <person name="Yang S.-P."/>
            <person name="Pohl C."/>
            <person name="Wallis J.W."/>
            <person name="Spieth J."/>
            <person name="Bieri T.A."/>
            <person name="Berkowicz N."/>
            <person name="Nelson J.O."/>
            <person name="Osborne J."/>
            <person name="Ding L."/>
            <person name="Meyer R."/>
            <person name="Sabo A."/>
            <person name="Shotland Y."/>
            <person name="Sinha P."/>
            <person name="Wohldmann P.E."/>
            <person name="Cook L.L."/>
            <person name="Hickenbotham M.T."/>
            <person name="Eldred J."/>
            <person name="Williams D."/>
            <person name="Jones T.A."/>
            <person name="She X."/>
            <person name="Ciccarelli F.D."/>
            <person name="Izaurralde E."/>
            <person name="Taylor J."/>
            <person name="Schmutz J."/>
            <person name="Myers R.M."/>
            <person name="Cox D.R."/>
            <person name="Huang X."/>
            <person name="McPherson J.D."/>
            <person name="Mardis E.R."/>
            <person name="Clifton S.W."/>
            <person name="Warren W.C."/>
            <person name="Chinwalla A.T."/>
            <person name="Eddy S.R."/>
            <person name="Marra M.A."/>
            <person name="Ovcharenko I."/>
            <person name="Furey T.S."/>
            <person name="Miller W."/>
            <person name="Eichler E.E."/>
            <person name="Bork P."/>
            <person name="Suyama M."/>
            <person name="Torrents D."/>
            <person name="Waterston R.H."/>
            <person name="Wilson R.K."/>
        </authorList>
    </citation>
    <scope>NUCLEOTIDE SEQUENCE [LARGE SCALE GENOMIC DNA]</scope>
</reference>
<reference key="3">
    <citation type="submission" date="2005-07" db="EMBL/GenBank/DDBJ databases">
        <authorList>
            <person name="Mural R.J."/>
            <person name="Istrail S."/>
            <person name="Sutton G.G."/>
            <person name="Florea L."/>
            <person name="Halpern A.L."/>
            <person name="Mobarry C.M."/>
            <person name="Lippert R."/>
            <person name="Walenz B."/>
            <person name="Shatkay H."/>
            <person name="Dew I."/>
            <person name="Miller J.R."/>
            <person name="Flanigan M.J."/>
            <person name="Edwards N.J."/>
            <person name="Bolanos R."/>
            <person name="Fasulo D."/>
            <person name="Halldorsson B.V."/>
            <person name="Hannenhalli S."/>
            <person name="Turner R."/>
            <person name="Yooseph S."/>
            <person name="Lu F."/>
            <person name="Nusskern D.R."/>
            <person name="Shue B.C."/>
            <person name="Zheng X.H."/>
            <person name="Zhong F."/>
            <person name="Delcher A.L."/>
            <person name="Huson D.H."/>
            <person name="Kravitz S.A."/>
            <person name="Mouchard L."/>
            <person name="Reinert K."/>
            <person name="Remington K.A."/>
            <person name="Clark A.G."/>
            <person name="Waterman M.S."/>
            <person name="Eichler E.E."/>
            <person name="Adams M.D."/>
            <person name="Hunkapiller M.W."/>
            <person name="Myers E.W."/>
            <person name="Venter J.C."/>
        </authorList>
    </citation>
    <scope>NUCLEOTIDE SEQUENCE [LARGE SCALE GENOMIC DNA]</scope>
</reference>
<dbReference type="EMBL" id="AB568489">
    <property type="protein sequence ID" value="BAJ46228.1"/>
    <property type="molecule type" value="mRNA"/>
</dbReference>
<dbReference type="EMBL" id="AC073043">
    <property type="status" value="NOT_ANNOTATED_CDS"/>
    <property type="molecule type" value="Genomic_DNA"/>
</dbReference>
<dbReference type="EMBL" id="CH471063">
    <property type="protein sequence ID" value="EAW70188.1"/>
    <property type="molecule type" value="Genomic_DNA"/>
</dbReference>
<dbReference type="CCDS" id="CCDS86907.1"/>
<dbReference type="RefSeq" id="NP_001337782.1">
    <property type="nucleotide sequence ID" value="NM_001350853.2"/>
</dbReference>
<dbReference type="RefSeq" id="XP_024308621.2">
    <property type="nucleotide sequence ID" value="XM_024452853.2"/>
</dbReference>
<dbReference type="RefSeq" id="XP_047300119.1">
    <property type="nucleotide sequence ID" value="XM_047444163.1"/>
</dbReference>
<dbReference type="RefSeq" id="XP_054197760.1">
    <property type="nucleotide sequence ID" value="XM_054341785.1"/>
</dbReference>
<dbReference type="RefSeq" id="XP_054197761.1">
    <property type="nucleotide sequence ID" value="XM_054341786.1"/>
</dbReference>
<dbReference type="FunCoup" id="E5RQL4">
    <property type="interactions" value="4"/>
</dbReference>
<dbReference type="STRING" id="9606.ENSP00000482786"/>
<dbReference type="GlyGen" id="E5RQL4">
    <property type="glycosylation" value="1 site, 1 O-linked glycan (1 site)"/>
</dbReference>
<dbReference type="iPTMnet" id="E5RQL4"/>
<dbReference type="BioMuta" id="FTCDNL1"/>
<dbReference type="PaxDb" id="9606-ENSP00000482786"/>
<dbReference type="Antibodypedia" id="81925">
    <property type="antibodies" value="2 antibodies from 2 providers"/>
</dbReference>
<dbReference type="Ensembl" id="ENST00000622774.2">
    <property type="protein sequence ID" value="ENSP00000482786.1"/>
    <property type="gene ID" value="ENSG00000226124.10"/>
</dbReference>
<dbReference type="GeneID" id="348751"/>
<dbReference type="UCSC" id="uc021vup.2">
    <property type="organism name" value="human"/>
</dbReference>
<dbReference type="AGR" id="HGNC:48661"/>
<dbReference type="GeneCards" id="FTCDNL1"/>
<dbReference type="HGNC" id="HGNC:48661">
    <property type="gene designation" value="FTCDNL1"/>
</dbReference>
<dbReference type="HPA" id="ENSG00000226124">
    <property type="expression patterns" value="Low tissue specificity"/>
</dbReference>
<dbReference type="MIM" id="614308">
    <property type="type" value="gene"/>
</dbReference>
<dbReference type="neXtProt" id="NX_E5RQL4"/>
<dbReference type="OpenTargets" id="ENSG00000226124"/>
<dbReference type="VEuPathDB" id="HostDB:ENSG00000226124"/>
<dbReference type="eggNOG" id="ENOG502QS19">
    <property type="taxonomic scope" value="Eukaryota"/>
</dbReference>
<dbReference type="GeneTree" id="ENSGT00390000005581"/>
<dbReference type="HOGENOM" id="CLU_1854538_0_0_1"/>
<dbReference type="InParanoid" id="E5RQL4"/>
<dbReference type="OMA" id="EYPEVSM"/>
<dbReference type="OrthoDB" id="48036at2759"/>
<dbReference type="PAN-GO" id="E5RQL4">
    <property type="GO annotations" value="0 GO annotations based on evolutionary models"/>
</dbReference>
<dbReference type="ChiTaRS" id="FTCDNL1">
    <property type="organism name" value="human"/>
</dbReference>
<dbReference type="Pharos" id="E5RQL4">
    <property type="development level" value="Tdark"/>
</dbReference>
<dbReference type="PRO" id="PR:E5RQL4"/>
<dbReference type="Proteomes" id="UP000005640">
    <property type="component" value="Chromosome 2"/>
</dbReference>
<dbReference type="RNAct" id="E5RQL4">
    <property type="molecule type" value="protein"/>
</dbReference>
<dbReference type="Bgee" id="ENSG00000226124">
    <property type="expression patterns" value="Expressed in gastrocnemius and 105 other cell types or tissues"/>
</dbReference>
<dbReference type="ExpressionAtlas" id="E5RQL4">
    <property type="expression patterns" value="baseline and differential"/>
</dbReference>
<dbReference type="GO" id="GO:0043231">
    <property type="term" value="C:intracellular membrane-bounded organelle"/>
    <property type="evidence" value="ECO:0000314"/>
    <property type="project" value="HPA"/>
</dbReference>
<dbReference type="GO" id="GO:0005542">
    <property type="term" value="F:folic acid binding"/>
    <property type="evidence" value="ECO:0007669"/>
    <property type="project" value="InterPro"/>
</dbReference>
<dbReference type="GO" id="GO:0016740">
    <property type="term" value="F:transferase activity"/>
    <property type="evidence" value="ECO:0007669"/>
    <property type="project" value="InterPro"/>
</dbReference>
<dbReference type="Gene3D" id="3.30.990.10">
    <property type="entry name" value="Formiminotransferase, N-terminal subdomain"/>
    <property type="match status" value="2"/>
</dbReference>
<dbReference type="InterPro" id="IPR012886">
    <property type="entry name" value="Formiminotransferase_N"/>
</dbReference>
<dbReference type="InterPro" id="IPR037064">
    <property type="entry name" value="Formiminotransferase_N_sf"/>
</dbReference>
<dbReference type="InterPro" id="IPR022384">
    <property type="entry name" value="FormiminoTrfase_cat_dom_sf"/>
</dbReference>
<dbReference type="InterPro" id="IPR051623">
    <property type="entry name" value="FTCD"/>
</dbReference>
<dbReference type="PANTHER" id="PTHR12234:SF1">
    <property type="entry name" value="FORMIMINOTRANSFERASE N-TERMINAL SUBDOMAIN-CONTAINING PROTEIN"/>
    <property type="match status" value="1"/>
</dbReference>
<dbReference type="PANTHER" id="PTHR12234">
    <property type="entry name" value="FORMIMINOTRANSFERASE-CYCLODEAMINASE"/>
    <property type="match status" value="1"/>
</dbReference>
<dbReference type="Pfam" id="PF07837">
    <property type="entry name" value="FTCD_N"/>
    <property type="match status" value="1"/>
</dbReference>
<dbReference type="SMART" id="SM01222">
    <property type="entry name" value="FTCD_N"/>
    <property type="match status" value="1"/>
</dbReference>
<dbReference type="SUPFAM" id="SSF55116">
    <property type="entry name" value="Formiminotransferase domain of formiminotransferase-cyclodeaminase"/>
    <property type="match status" value="1"/>
</dbReference>
<feature type="signal peptide" evidence="1">
    <location>
        <begin position="1"/>
        <end position="20"/>
    </location>
</feature>
<feature type="chain" id="PRO_0000414629" description="Formiminotransferase N-terminal subdomain-containing protein">
    <location>
        <begin position="21"/>
        <end position="147"/>
    </location>
</feature>
<proteinExistence type="evidence at transcript level"/>
<sequence>MSSSRVGLRLAACLLNVSEAGRKYIVENIAKAALLDKNGKKHPQVSVLNIFSDQDYKRSVITIATSVDKLGLAEDLVLHVPGCSVFLFGEADLPEKRSLVQRRKQLGWFTRRDFSALQPDLGAAPSQRCGLTGSEHGFCFALFFFFF</sequence>
<keyword id="KW-1185">Reference proteome</keyword>
<keyword id="KW-0732">Signal</keyword>
<name>FONG_HUMAN</name>